<evidence type="ECO:0000255" key="1"/>
<evidence type="ECO:0000255" key="2">
    <source>
        <dbReference type="PROSITE-ProRule" id="PRU00114"/>
    </source>
</evidence>
<evidence type="ECO:0000305" key="3"/>
<evidence type="ECO:0007829" key="4">
    <source>
        <dbReference type="PDB" id="2P24"/>
    </source>
</evidence>
<evidence type="ECO:0007829" key="5">
    <source>
        <dbReference type="PDB" id="2Z31"/>
    </source>
</evidence>
<comment type="subcellular location">
    <subcellularLocation>
        <location evidence="3">Membrane</location>
        <topology evidence="3">Single-pass type I membrane protein</topology>
    </subcellularLocation>
</comment>
<comment type="similarity">
    <text evidence="3">Belongs to the MHC class II family.</text>
</comment>
<keyword id="KW-0002">3D-structure</keyword>
<keyword id="KW-1064">Adaptive immunity</keyword>
<keyword id="KW-1015">Disulfide bond</keyword>
<keyword id="KW-0325">Glycoprotein</keyword>
<keyword id="KW-0391">Immunity</keyword>
<keyword id="KW-0472">Membrane</keyword>
<keyword id="KW-0491">MHC II</keyword>
<keyword id="KW-1185">Reference proteome</keyword>
<keyword id="KW-0812">Transmembrane</keyword>
<keyword id="KW-1133">Transmembrane helix</keyword>
<feature type="chain" id="PRO_0000080749" description="H-2 class II histocompatibility antigen, A-U alpha chain">
    <location>
        <begin position="1" status="less than"/>
        <end position="227"/>
    </location>
</feature>
<feature type="topological domain" description="Extracellular" evidence="1">
    <location>
        <begin position="1" status="less than"/>
        <end position="189"/>
    </location>
</feature>
<feature type="transmembrane region" description="Helical" evidence="1">
    <location>
        <begin position="190"/>
        <end position="215"/>
    </location>
</feature>
<feature type="topological domain" description="Cytoplasmic" evidence="1">
    <location>
        <begin position="216"/>
        <end position="227"/>
    </location>
</feature>
<feature type="domain" description="Ig-like C1-type">
    <location>
        <begin position="85"/>
        <end position="177"/>
    </location>
</feature>
<feature type="region of interest" description="Alpha-1">
    <location>
        <begin position="1" status="less than"/>
        <end position="82"/>
    </location>
</feature>
<feature type="region of interest" description="Alpha-2">
    <location>
        <begin position="83"/>
        <end position="176"/>
    </location>
</feature>
<feature type="region of interest" description="Connecting peptide">
    <location>
        <begin position="177"/>
        <end position="189"/>
    </location>
</feature>
<feature type="glycosylation site" description="N-linked (GlcNAc...) asparagine" evidence="1">
    <location>
        <position position="116"/>
    </location>
</feature>
<feature type="disulfide bond" evidence="2">
    <location>
        <begin position="105"/>
        <end position="161"/>
    </location>
</feature>
<feature type="non-terminal residue">
    <location>
        <position position="1"/>
    </location>
</feature>
<feature type="strand" evidence="4">
    <location>
        <begin position="1"/>
        <end position="13"/>
    </location>
</feature>
<feature type="turn" evidence="4">
    <location>
        <begin position="14"/>
        <end position="16"/>
    </location>
</feature>
<feature type="strand" evidence="4">
    <location>
        <begin position="17"/>
        <end position="24"/>
    </location>
</feature>
<feature type="strand" evidence="4">
    <location>
        <begin position="27"/>
        <end position="33"/>
    </location>
</feature>
<feature type="turn" evidence="4">
    <location>
        <begin position="34"/>
        <end position="37"/>
    </location>
</feature>
<feature type="strand" evidence="4">
    <location>
        <begin position="38"/>
        <end position="43"/>
    </location>
</feature>
<feature type="helix" evidence="4">
    <location>
        <begin position="46"/>
        <end position="48"/>
    </location>
</feature>
<feature type="helix" evidence="4">
    <location>
        <begin position="55"/>
        <end position="74"/>
    </location>
</feature>
<feature type="turn" evidence="5">
    <location>
        <begin position="75"/>
        <end position="77"/>
    </location>
</feature>
<feature type="strand" evidence="4">
    <location>
        <begin position="86"/>
        <end position="93"/>
    </location>
</feature>
<feature type="strand" evidence="4">
    <location>
        <begin position="101"/>
        <end position="110"/>
    </location>
</feature>
<feature type="strand" evidence="4">
    <location>
        <begin position="116"/>
        <end position="121"/>
    </location>
</feature>
<feature type="strand" evidence="4">
    <location>
        <begin position="124"/>
        <end position="126"/>
    </location>
</feature>
<feature type="strand" evidence="4">
    <location>
        <begin position="130"/>
        <end position="132"/>
    </location>
</feature>
<feature type="strand" evidence="4">
    <location>
        <begin position="143"/>
        <end position="151"/>
    </location>
</feature>
<feature type="strand" evidence="4">
    <location>
        <begin position="159"/>
        <end position="164"/>
    </location>
</feature>
<feature type="strand" evidence="4">
    <location>
        <begin position="172"/>
        <end position="176"/>
    </location>
</feature>
<name>HA2U_MOUSE</name>
<dbReference type="EMBL" id="K01926">
    <property type="protein sequence ID" value="AAA39623.1"/>
    <property type="molecule type" value="mRNA"/>
</dbReference>
<dbReference type="PIR" id="PL0125">
    <property type="entry name" value="PL0125"/>
</dbReference>
<dbReference type="PDB" id="1K2D">
    <property type="method" value="X-ray"/>
    <property type="resolution" value="2.20 A"/>
    <property type="chains" value="A=1-179"/>
</dbReference>
<dbReference type="PDB" id="1U3H">
    <property type="method" value="X-ray"/>
    <property type="resolution" value="2.42 A"/>
    <property type="chains" value="C/G=1-179"/>
</dbReference>
<dbReference type="PDB" id="2P24">
    <property type="method" value="X-ray"/>
    <property type="resolution" value="2.15 A"/>
    <property type="chains" value="A=1-190"/>
</dbReference>
<dbReference type="PDB" id="2PXY">
    <property type="method" value="X-ray"/>
    <property type="resolution" value="2.23 A"/>
    <property type="chains" value="C=1-178"/>
</dbReference>
<dbReference type="PDB" id="2Z31">
    <property type="method" value="X-ray"/>
    <property type="resolution" value="2.70 A"/>
    <property type="chains" value="C=1-178"/>
</dbReference>
<dbReference type="PDBsum" id="1K2D"/>
<dbReference type="PDBsum" id="1U3H"/>
<dbReference type="PDBsum" id="2P24"/>
<dbReference type="PDBsum" id="2PXY"/>
<dbReference type="PDBsum" id="2Z31"/>
<dbReference type="SMR" id="P14438"/>
<dbReference type="MINT" id="P14438"/>
<dbReference type="GlyCosmos" id="P14438">
    <property type="glycosylation" value="1 site, No reported glycans"/>
</dbReference>
<dbReference type="PeptideAtlas" id="P14438"/>
<dbReference type="ProteomicsDB" id="271388"/>
<dbReference type="AGR" id="MGI:95895"/>
<dbReference type="MGI" id="MGI:95895">
    <property type="gene designation" value="H2-Aa"/>
</dbReference>
<dbReference type="OrthoDB" id="8925804at2759"/>
<dbReference type="ChiTaRS" id="H2-Aa">
    <property type="organism name" value="mouse"/>
</dbReference>
<dbReference type="EvolutionaryTrace" id="P14438"/>
<dbReference type="Proteomes" id="UP000000589">
    <property type="component" value="Unplaced"/>
</dbReference>
<dbReference type="GO" id="GO:0009897">
    <property type="term" value="C:external side of plasma membrane"/>
    <property type="evidence" value="ECO:0000314"/>
    <property type="project" value="MGI"/>
</dbReference>
<dbReference type="GO" id="GO:0005764">
    <property type="term" value="C:lysosome"/>
    <property type="evidence" value="ECO:0000314"/>
    <property type="project" value="MGI"/>
</dbReference>
<dbReference type="GO" id="GO:0042613">
    <property type="term" value="C:MHC class II protein complex"/>
    <property type="evidence" value="ECO:0000314"/>
    <property type="project" value="MGI"/>
</dbReference>
<dbReference type="GO" id="GO:0005886">
    <property type="term" value="C:plasma membrane"/>
    <property type="evidence" value="ECO:0000314"/>
    <property type="project" value="MGI"/>
</dbReference>
<dbReference type="GO" id="GO:0042605">
    <property type="term" value="F:peptide antigen binding"/>
    <property type="evidence" value="ECO:0000314"/>
    <property type="project" value="MGI"/>
</dbReference>
<dbReference type="GO" id="GO:0002250">
    <property type="term" value="P:adaptive immune response"/>
    <property type="evidence" value="ECO:0007669"/>
    <property type="project" value="UniProtKB-KW"/>
</dbReference>
<dbReference type="GO" id="GO:0019882">
    <property type="term" value="P:antigen processing and presentation"/>
    <property type="evidence" value="ECO:0000314"/>
    <property type="project" value="MGI"/>
</dbReference>
<dbReference type="GO" id="GO:0019886">
    <property type="term" value="P:antigen processing and presentation of exogenous peptide antigen via MHC class II"/>
    <property type="evidence" value="ECO:0000314"/>
    <property type="project" value="MGI"/>
</dbReference>
<dbReference type="GO" id="GO:0048002">
    <property type="term" value="P:antigen processing and presentation of peptide antigen"/>
    <property type="evidence" value="ECO:0000314"/>
    <property type="project" value="MGI"/>
</dbReference>
<dbReference type="GO" id="GO:0045582">
    <property type="term" value="P:positive regulation of T cell differentiation"/>
    <property type="evidence" value="ECO:0000314"/>
    <property type="project" value="MGI"/>
</dbReference>
<dbReference type="CDD" id="cd21006">
    <property type="entry name" value="IgC1_MHC_II_alpha_I-A"/>
    <property type="match status" value="1"/>
</dbReference>
<dbReference type="FunFam" id="2.60.40.10:FF:000280">
    <property type="entry name" value="HLA class II histocompatibility antigen, DR alpha chain"/>
    <property type="match status" value="1"/>
</dbReference>
<dbReference type="FunFam" id="3.10.320.10:FF:000002">
    <property type="entry name" value="HLA class II histocompatibility antigen, DR alpha chain"/>
    <property type="match status" value="1"/>
</dbReference>
<dbReference type="Gene3D" id="3.10.320.10">
    <property type="entry name" value="Class II Histocompatibility Antigen, M Beta Chain, Chain B, domain 1"/>
    <property type="match status" value="1"/>
</dbReference>
<dbReference type="Gene3D" id="2.60.40.10">
    <property type="entry name" value="Immunoglobulins"/>
    <property type="match status" value="1"/>
</dbReference>
<dbReference type="InterPro" id="IPR007110">
    <property type="entry name" value="Ig-like_dom"/>
</dbReference>
<dbReference type="InterPro" id="IPR036179">
    <property type="entry name" value="Ig-like_dom_sf"/>
</dbReference>
<dbReference type="InterPro" id="IPR013783">
    <property type="entry name" value="Ig-like_fold"/>
</dbReference>
<dbReference type="InterPro" id="IPR003006">
    <property type="entry name" value="Ig/MHC_CS"/>
</dbReference>
<dbReference type="InterPro" id="IPR003597">
    <property type="entry name" value="Ig_C1-set"/>
</dbReference>
<dbReference type="InterPro" id="IPR050160">
    <property type="entry name" value="MHC/Immunoglobulin"/>
</dbReference>
<dbReference type="InterPro" id="IPR011162">
    <property type="entry name" value="MHC_I/II-like_Ag-recog"/>
</dbReference>
<dbReference type="InterPro" id="IPR014745">
    <property type="entry name" value="MHC_II_a/b_N"/>
</dbReference>
<dbReference type="InterPro" id="IPR001003">
    <property type="entry name" value="MHC_II_a_N"/>
</dbReference>
<dbReference type="PANTHER" id="PTHR19944:SF59">
    <property type="entry name" value="HLA CLASS II HISTOCOMPATIBILITY ANTIGEN, DQ ALPHA 1 CHAIN"/>
    <property type="match status" value="1"/>
</dbReference>
<dbReference type="PANTHER" id="PTHR19944">
    <property type="entry name" value="MHC CLASS II-RELATED"/>
    <property type="match status" value="1"/>
</dbReference>
<dbReference type="Pfam" id="PF07654">
    <property type="entry name" value="C1-set"/>
    <property type="match status" value="1"/>
</dbReference>
<dbReference type="Pfam" id="PF00993">
    <property type="entry name" value="MHC_II_alpha"/>
    <property type="match status" value="1"/>
</dbReference>
<dbReference type="SMART" id="SM00407">
    <property type="entry name" value="IGc1"/>
    <property type="match status" value="1"/>
</dbReference>
<dbReference type="SMART" id="SM00920">
    <property type="entry name" value="MHC_II_alpha"/>
    <property type="match status" value="1"/>
</dbReference>
<dbReference type="SUPFAM" id="SSF48726">
    <property type="entry name" value="Immunoglobulin"/>
    <property type="match status" value="1"/>
</dbReference>
<dbReference type="SUPFAM" id="SSF54452">
    <property type="entry name" value="MHC antigen-recognition domain"/>
    <property type="match status" value="1"/>
</dbReference>
<dbReference type="PROSITE" id="PS50835">
    <property type="entry name" value="IG_LIKE"/>
    <property type="match status" value="1"/>
</dbReference>
<dbReference type="PROSITE" id="PS00290">
    <property type="entry name" value="IG_MHC"/>
    <property type="match status" value="1"/>
</dbReference>
<gene>
    <name type="primary">H2-Aa</name>
</gene>
<protein>
    <recommendedName>
        <fullName>H-2 class II histocompatibility antigen, A-U alpha chain</fullName>
    </recommendedName>
</protein>
<reference key="1">
    <citation type="journal article" date="1983" name="Cell">
        <title>Regions of allelic hypervariability in the murine A alpha immune response gene.</title>
        <authorList>
            <person name="Benoist C.O."/>
            <person name="Mathis D.J."/>
            <person name="Kanter M.R."/>
            <person name="Williams V.E."/>
            <person name="McDevitt H.O."/>
        </authorList>
    </citation>
    <scope>NUCLEOTIDE SEQUENCE [MRNA]</scope>
</reference>
<reference key="2">
    <citation type="journal article" date="2010" name="Cell">
        <title>A tissue-specific atlas of mouse protein phosphorylation and expression.</title>
        <authorList>
            <person name="Huttlin E.L."/>
            <person name="Jedrychowski M.P."/>
            <person name="Elias J.E."/>
            <person name="Goswami T."/>
            <person name="Rad R."/>
            <person name="Beausoleil S.A."/>
            <person name="Villen J."/>
            <person name="Haas W."/>
            <person name="Sowa M.E."/>
            <person name="Gygi S.P."/>
        </authorList>
    </citation>
    <scope>IDENTIFICATION BY MASS SPECTROMETRY [LARGE SCALE ANALYSIS]</scope>
    <source>
        <tissue>Heart</tissue>
        <tissue>Kidney</tissue>
        <tissue>Lung</tissue>
        <tissue>Spleen</tissue>
    </source>
</reference>
<organism>
    <name type="scientific">Mus musculus</name>
    <name type="common">Mouse</name>
    <dbReference type="NCBI Taxonomy" id="10090"/>
    <lineage>
        <taxon>Eukaryota</taxon>
        <taxon>Metazoa</taxon>
        <taxon>Chordata</taxon>
        <taxon>Craniata</taxon>
        <taxon>Vertebrata</taxon>
        <taxon>Euteleostomi</taxon>
        <taxon>Mammalia</taxon>
        <taxon>Eutheria</taxon>
        <taxon>Euarchontoglires</taxon>
        <taxon>Glires</taxon>
        <taxon>Rodentia</taxon>
        <taxon>Myomorpha</taxon>
        <taxon>Muroidea</taxon>
        <taxon>Muridae</taxon>
        <taxon>Murinae</taxon>
        <taxon>Mus</taxon>
        <taxon>Mus</taxon>
    </lineage>
</organism>
<sequence length="227" mass="25136">DHVGSYGIVVYQSPGDIGQYTFEFDGDELFYVDLDKKETIWMLPEFAQLRSFDPQGGLQNIATGKHNLGVLTKRSNSTPATNEAPQATVFPKSPVLLGQPNTLICFVDNIFPPVINITWLRNSKSVADGVYETSFFVNRDYSFHKLSYLTFIPSDDDIYDCKVEHWGLEEPVLKHWEPEIPAPMSELTETVVCALGLSVGLVGIVVGTIFIIQGLRSGGTSRHPGPL</sequence>
<accession>P14438</accession>
<proteinExistence type="evidence at protein level"/>